<reference key="1">
    <citation type="journal article" date="1990" name="Mol. Cell. Biol.">
        <title>Novel yeast protein kinase (YPK1 gene product) is a 40-kilodalton phosphotyrosyl protein associated with protein-tyrosine kinase activity.</title>
        <authorList>
            <person name="Dailey D."/>
            <person name="Schieven G.L."/>
            <person name="Lim M.-Y."/>
            <person name="Marquardt H."/>
            <person name="Gilmore T."/>
            <person name="Thorner J."/>
            <person name="Martin G.S."/>
        </authorList>
    </citation>
    <scope>NUCLEOTIDE SEQUENCE [GENOMIC DNA]</scope>
    <scope>PARTIAL PROTEIN SEQUENCE</scope>
</reference>
<reference key="2">
    <citation type="journal article" date="1991" name="Genes Dev.">
        <title>The yeast MCK1 gene encodes a protein kinase homolog that activates early meiotic gene expression.</title>
        <authorList>
            <person name="Neigeborn L."/>
            <person name="Mitchell A.P."/>
        </authorList>
    </citation>
    <scope>NUCLEOTIDE SEQUENCE [GENOMIC DNA]</scope>
</reference>
<reference key="3">
    <citation type="journal article" date="1991" name="Genes Dev.">
        <title>A suppressor of a centromere DNA mutation encodes a putative protein kinase (MCK1).</title>
        <authorList>
            <person name="Shero J.H."/>
            <person name="Hieter P."/>
        </authorList>
    </citation>
    <scope>NUCLEOTIDE SEQUENCE [GENOMIC DNA]</scope>
</reference>
<reference key="4">
    <citation type="journal article" date="1995" name="Yeast">
        <title>Sequencing analysis of a 24.7 kb fragment of yeast chromosome XIV identifies six known genes, a new member of the hexose transporter family and ten new open reading frames.</title>
        <authorList>
            <person name="Maftahi M."/>
            <person name="Nicaud J.-M."/>
            <person name="Levesque H."/>
            <person name="Gaillardin C."/>
        </authorList>
    </citation>
    <scope>NUCLEOTIDE SEQUENCE [GENOMIC DNA]</scope>
    <source>
        <strain>S288c / FY1676</strain>
    </source>
</reference>
<reference key="5">
    <citation type="journal article" date="1997" name="Nature">
        <title>The nucleotide sequence of Saccharomyces cerevisiae chromosome XIV and its evolutionary implications.</title>
        <authorList>
            <person name="Philippsen P."/>
            <person name="Kleine K."/>
            <person name="Poehlmann R."/>
            <person name="Duesterhoeft A."/>
            <person name="Hamberg K."/>
            <person name="Hegemann J.H."/>
            <person name="Obermaier B."/>
            <person name="Urrestarazu L.A."/>
            <person name="Aert R."/>
            <person name="Albermann K."/>
            <person name="Altmann R."/>
            <person name="Andre B."/>
            <person name="Baladron V."/>
            <person name="Ballesta J.P.G."/>
            <person name="Becam A.-M."/>
            <person name="Beinhauer J.D."/>
            <person name="Boskovic J."/>
            <person name="Buitrago M.J."/>
            <person name="Bussereau F."/>
            <person name="Coster F."/>
            <person name="Crouzet M."/>
            <person name="D'Angelo M."/>
            <person name="Dal Pero F."/>
            <person name="De Antoni A."/>
            <person name="del Rey F."/>
            <person name="Doignon F."/>
            <person name="Domdey H."/>
            <person name="Dubois E."/>
            <person name="Fiedler T.A."/>
            <person name="Fleig U."/>
            <person name="Floeth M."/>
            <person name="Fritz C."/>
            <person name="Gaillardin C."/>
            <person name="Garcia-Cantalejo J.M."/>
            <person name="Glansdorff N."/>
            <person name="Goffeau A."/>
            <person name="Gueldener U."/>
            <person name="Herbert C.J."/>
            <person name="Heumann K."/>
            <person name="Heuss-Neitzel D."/>
            <person name="Hilbert H."/>
            <person name="Hinni K."/>
            <person name="Iraqui Houssaini I."/>
            <person name="Jacquet M."/>
            <person name="Jimenez A."/>
            <person name="Jonniaux J.-L."/>
            <person name="Karpfinger-Hartl L."/>
            <person name="Lanfranchi G."/>
            <person name="Lepingle A."/>
            <person name="Levesque H."/>
            <person name="Lyck R."/>
            <person name="Maftahi M."/>
            <person name="Mallet L."/>
            <person name="Maurer C.T.C."/>
            <person name="Messenguy F."/>
            <person name="Mewes H.-W."/>
            <person name="Moestl D."/>
            <person name="Nasr F."/>
            <person name="Nicaud J.-M."/>
            <person name="Niedenthal R.K."/>
            <person name="Pandolfo D."/>
            <person name="Pierard A."/>
            <person name="Piravandi E."/>
            <person name="Planta R.J."/>
            <person name="Pohl T.M."/>
            <person name="Purnelle B."/>
            <person name="Rebischung C."/>
            <person name="Remacha M.A."/>
            <person name="Revuelta J.L."/>
            <person name="Rinke M."/>
            <person name="Saiz J.E."/>
            <person name="Sartorello F."/>
            <person name="Scherens B."/>
            <person name="Sen-Gupta M."/>
            <person name="Soler-Mira A."/>
            <person name="Urbanus J.H.M."/>
            <person name="Valle G."/>
            <person name="Van Dyck L."/>
            <person name="Verhasselt P."/>
            <person name="Vierendeels F."/>
            <person name="Vissers S."/>
            <person name="Voet M."/>
            <person name="Volckaert G."/>
            <person name="Wach A."/>
            <person name="Wambutt R."/>
            <person name="Wedler H."/>
            <person name="Zollner A."/>
            <person name="Hani J."/>
        </authorList>
    </citation>
    <scope>NUCLEOTIDE SEQUENCE [LARGE SCALE GENOMIC DNA]</scope>
    <source>
        <strain>ATCC 204508 / S288c</strain>
    </source>
</reference>
<reference key="6">
    <citation type="journal article" date="2014" name="G3 (Bethesda)">
        <title>The reference genome sequence of Saccharomyces cerevisiae: Then and now.</title>
        <authorList>
            <person name="Engel S.R."/>
            <person name="Dietrich F.S."/>
            <person name="Fisk D.G."/>
            <person name="Binkley G."/>
            <person name="Balakrishnan R."/>
            <person name="Costanzo M.C."/>
            <person name="Dwight S.S."/>
            <person name="Hitz B.C."/>
            <person name="Karra K."/>
            <person name="Nash R.S."/>
            <person name="Weng S."/>
            <person name="Wong E.D."/>
            <person name="Lloyd P."/>
            <person name="Skrzypek M.S."/>
            <person name="Miyasato S.R."/>
            <person name="Simison M."/>
            <person name="Cherry J.M."/>
        </authorList>
    </citation>
    <scope>GENOME REANNOTATION</scope>
    <source>
        <strain>ATCC 204508 / S288c</strain>
    </source>
</reference>
<reference key="7">
    <citation type="journal article" date="1995" name="Yeast">
        <title>Sequence analysis of a 30 kb DNA segment from yeast chromosome XIV carrying a ribosomal protein gene cluster, the genes encoding a plasma membrane protein and a subunit of replication factor C, and a novel putative serine/threonine protein kinase gene.</title>
        <authorList>
            <person name="Maurer K.C.T."/>
            <person name="Urbanus J.H.M."/>
            <person name="Planta R.J."/>
        </authorList>
    </citation>
    <scope>NUCLEOTIDE SEQUENCE [GENOMIC DNA] OF 1-16</scope>
    <source>
        <strain>ATCC 96604 / S288c / FY1679</strain>
    </source>
</reference>
<reference key="8">
    <citation type="journal article" date="2003" name="Nature">
        <title>Global analysis of protein expression in yeast.</title>
        <authorList>
            <person name="Ghaemmaghami S."/>
            <person name="Huh W.-K."/>
            <person name="Bower K."/>
            <person name="Howson R.W."/>
            <person name="Belle A."/>
            <person name="Dephoure N."/>
            <person name="O'Shea E.K."/>
            <person name="Weissman J.S."/>
        </authorList>
    </citation>
    <scope>LEVEL OF PROTEIN EXPRESSION [LARGE SCALE ANALYSIS]</scope>
</reference>
<reference key="9">
    <citation type="journal article" date="2007" name="J. Proteome Res.">
        <title>Large-scale phosphorylation analysis of alpha-factor-arrested Saccharomyces cerevisiae.</title>
        <authorList>
            <person name="Li X."/>
            <person name="Gerber S.A."/>
            <person name="Rudner A.D."/>
            <person name="Beausoleil S.A."/>
            <person name="Haas W."/>
            <person name="Villen J."/>
            <person name="Elias J.E."/>
            <person name="Gygi S.P."/>
        </authorList>
    </citation>
    <scope>PHOSPHORYLATION [LARGE SCALE ANALYSIS] AT TYR-199</scope>
    <scope>IDENTIFICATION BY MASS SPECTROMETRY [LARGE SCALE ANALYSIS]</scope>
    <source>
        <strain>ADR376</strain>
    </source>
</reference>
<reference key="10">
    <citation type="journal article" date="2008" name="Mol. Cell. Proteomics">
        <title>A multidimensional chromatography technology for in-depth phosphoproteome analysis.</title>
        <authorList>
            <person name="Albuquerque C.P."/>
            <person name="Smolka M.B."/>
            <person name="Payne S.H."/>
            <person name="Bafna V."/>
            <person name="Eng J."/>
            <person name="Zhou H."/>
        </authorList>
    </citation>
    <scope>PHOSPHORYLATION [LARGE SCALE ANALYSIS] AT SER-198</scope>
    <scope>IDENTIFICATION BY MASS SPECTROMETRY [LARGE SCALE ANALYSIS]</scope>
</reference>
<reference key="11">
    <citation type="journal article" date="2009" name="Science">
        <title>Global analysis of Cdk1 substrate phosphorylation sites provides insights into evolution.</title>
        <authorList>
            <person name="Holt L.J."/>
            <person name="Tuch B.B."/>
            <person name="Villen J."/>
            <person name="Johnson A.D."/>
            <person name="Gygi S.P."/>
            <person name="Morgan D.O."/>
        </authorList>
    </citation>
    <scope>PHOSPHORYLATION [LARGE SCALE ANALYSIS] AT SER-198; TYR-199 AND SER-202</scope>
    <scope>IDENTIFICATION BY MASS SPECTROMETRY [LARGE SCALE ANALYSIS]</scope>
</reference>
<reference key="12">
    <citation type="journal article" date="2012" name="Proc. Natl. Acad. Sci. U.S.A.">
        <title>N-terminal acetylome analyses and functional insights of the N-terminal acetyltransferase NatB.</title>
        <authorList>
            <person name="Van Damme P."/>
            <person name="Lasa M."/>
            <person name="Polevoda B."/>
            <person name="Gazquez C."/>
            <person name="Elosegui-Artola A."/>
            <person name="Kim D.S."/>
            <person name="De Juan-Pardo E."/>
            <person name="Demeyer K."/>
            <person name="Hole K."/>
            <person name="Larrea E."/>
            <person name="Timmerman E."/>
            <person name="Prieto J."/>
            <person name="Arnesen T."/>
            <person name="Sherman F."/>
            <person name="Gevaert K."/>
            <person name="Aldabe R."/>
        </authorList>
    </citation>
    <scope>ACETYLATION [LARGE SCALE ANALYSIS] AT SER-2</scope>
    <scope>CLEAVAGE OF INITIATOR METHIONINE [LARGE SCALE ANALYSIS]</scope>
    <scope>IDENTIFICATION BY MASS SPECTROMETRY [LARGE SCALE ANALYSIS]</scope>
</reference>
<organism>
    <name type="scientific">Saccharomyces cerevisiae (strain ATCC 204508 / S288c)</name>
    <name type="common">Baker's yeast</name>
    <dbReference type="NCBI Taxonomy" id="559292"/>
    <lineage>
        <taxon>Eukaryota</taxon>
        <taxon>Fungi</taxon>
        <taxon>Dikarya</taxon>
        <taxon>Ascomycota</taxon>
        <taxon>Saccharomycotina</taxon>
        <taxon>Saccharomycetes</taxon>
        <taxon>Saccharomycetales</taxon>
        <taxon>Saccharomycetaceae</taxon>
        <taxon>Saccharomyces</taxon>
    </lineage>
</organism>
<gene>
    <name type="primary">MCK1</name>
    <name type="synonym">YPK1</name>
    <name type="ordered locus">YNL307C</name>
    <name type="ORF">N0392</name>
</gene>
<dbReference type="EC" id="2.7.12.1"/>
<dbReference type="EMBL" id="X55054">
    <property type="protein sequence ID" value="CAA38895.1"/>
    <property type="molecule type" value="Genomic_DNA"/>
</dbReference>
<dbReference type="EMBL" id="M55984">
    <property type="protein sequence ID" value="AAA34764.1"/>
    <property type="molecule type" value="Genomic_DNA"/>
</dbReference>
<dbReference type="EMBL" id="Z46259">
    <property type="protein sequence ID" value="CAA86388.1"/>
    <property type="molecule type" value="Genomic_DNA"/>
</dbReference>
<dbReference type="EMBL" id="Z71583">
    <property type="protein sequence ID" value="CAA96236.1"/>
    <property type="molecule type" value="Genomic_DNA"/>
</dbReference>
<dbReference type="EMBL" id="Z71582">
    <property type="protein sequence ID" value="CAA96235.1"/>
    <property type="molecule type" value="Genomic_DNA"/>
</dbReference>
<dbReference type="EMBL" id="BK006947">
    <property type="protein sequence ID" value="DAA10254.1"/>
    <property type="molecule type" value="Genomic_DNA"/>
</dbReference>
<dbReference type="PIR" id="A39622">
    <property type="entry name" value="A39622"/>
</dbReference>
<dbReference type="RefSeq" id="NP_014092.1">
    <property type="nucleotide sequence ID" value="NM_001183145.1"/>
</dbReference>
<dbReference type="SMR" id="P21965"/>
<dbReference type="BioGRID" id="35532">
    <property type="interactions" value="632"/>
</dbReference>
<dbReference type="DIP" id="DIP-5860N"/>
<dbReference type="FunCoup" id="P21965">
    <property type="interactions" value="473"/>
</dbReference>
<dbReference type="IntAct" id="P21965">
    <property type="interactions" value="55"/>
</dbReference>
<dbReference type="MINT" id="P21965"/>
<dbReference type="STRING" id="4932.YNL307C"/>
<dbReference type="iPTMnet" id="P21965"/>
<dbReference type="PaxDb" id="4932-YNL307C"/>
<dbReference type="PeptideAtlas" id="P21965"/>
<dbReference type="EnsemblFungi" id="YNL307C_mRNA">
    <property type="protein sequence ID" value="YNL307C"/>
    <property type="gene ID" value="YNL307C"/>
</dbReference>
<dbReference type="GeneID" id="855409"/>
<dbReference type="KEGG" id="sce:YNL307C"/>
<dbReference type="AGR" id="SGD:S000005251"/>
<dbReference type="SGD" id="S000005251">
    <property type="gene designation" value="MCK1"/>
</dbReference>
<dbReference type="VEuPathDB" id="FungiDB:YNL307C"/>
<dbReference type="eggNOG" id="KOG0658">
    <property type="taxonomic scope" value="Eukaryota"/>
</dbReference>
<dbReference type="GeneTree" id="ENSGT00520000055635"/>
<dbReference type="HOGENOM" id="CLU_000288_181_20_1"/>
<dbReference type="InParanoid" id="P21965"/>
<dbReference type="OMA" id="QHLAMEC"/>
<dbReference type="OrthoDB" id="272141at2759"/>
<dbReference type="BioCyc" id="YEAST:G3O-33294-MONOMER"/>
<dbReference type="BRENDA" id="2.7.11.26">
    <property type="organism ID" value="984"/>
</dbReference>
<dbReference type="Reactome" id="R-SCE-3371453">
    <property type="pathway name" value="Regulation of HSF1-mediated heat shock response"/>
</dbReference>
<dbReference type="Reactome" id="R-SCE-9856649">
    <property type="pathway name" value="Transcriptional and post-translational regulation of MITF-M expression and activity"/>
</dbReference>
<dbReference type="BioGRID-ORCS" id="855409">
    <property type="hits" value="1 hit in 13 CRISPR screens"/>
</dbReference>
<dbReference type="PRO" id="PR:P21965"/>
<dbReference type="Proteomes" id="UP000002311">
    <property type="component" value="Chromosome XIV"/>
</dbReference>
<dbReference type="RNAct" id="P21965">
    <property type="molecule type" value="protein"/>
</dbReference>
<dbReference type="GO" id="GO:0005737">
    <property type="term" value="C:cytoplasm"/>
    <property type="evidence" value="ECO:0000318"/>
    <property type="project" value="GO_Central"/>
</dbReference>
<dbReference type="GO" id="GO:0005634">
    <property type="term" value="C:nucleus"/>
    <property type="evidence" value="ECO:0000318"/>
    <property type="project" value="GO_Central"/>
</dbReference>
<dbReference type="GO" id="GO:0005524">
    <property type="term" value="F:ATP binding"/>
    <property type="evidence" value="ECO:0007669"/>
    <property type="project" value="UniProtKB-KW"/>
</dbReference>
<dbReference type="GO" id="GO:0030332">
    <property type="term" value="F:cyclin binding"/>
    <property type="evidence" value="ECO:0000353"/>
    <property type="project" value="SGD"/>
</dbReference>
<dbReference type="GO" id="GO:0004857">
    <property type="term" value="F:enzyme inhibitor activity"/>
    <property type="evidence" value="ECO:0000315"/>
    <property type="project" value="SGD"/>
</dbReference>
<dbReference type="GO" id="GO:0004672">
    <property type="term" value="F:protein kinase activity"/>
    <property type="evidence" value="ECO:0007005"/>
    <property type="project" value="SGD"/>
</dbReference>
<dbReference type="GO" id="GO:0106310">
    <property type="term" value="F:protein serine kinase activity"/>
    <property type="evidence" value="ECO:0007669"/>
    <property type="project" value="RHEA"/>
</dbReference>
<dbReference type="GO" id="GO:0004674">
    <property type="term" value="F:protein serine/threonine kinase activity"/>
    <property type="evidence" value="ECO:0000314"/>
    <property type="project" value="SGD"/>
</dbReference>
<dbReference type="GO" id="GO:0004712">
    <property type="term" value="F:protein serine/threonine/tyrosine kinase activity"/>
    <property type="evidence" value="ECO:0000314"/>
    <property type="project" value="SGD"/>
</dbReference>
<dbReference type="GO" id="GO:0004713">
    <property type="term" value="F:protein tyrosine kinase activity"/>
    <property type="evidence" value="ECO:0007669"/>
    <property type="project" value="RHEA"/>
</dbReference>
<dbReference type="GO" id="GO:0030437">
    <property type="term" value="P:ascospore formation"/>
    <property type="evidence" value="ECO:0000315"/>
    <property type="project" value="SGD"/>
</dbReference>
<dbReference type="GO" id="GO:0030154">
    <property type="term" value="P:cell differentiation"/>
    <property type="evidence" value="ECO:0000318"/>
    <property type="project" value="GO_Central"/>
</dbReference>
<dbReference type="GO" id="GO:0006303">
    <property type="term" value="P:double-strand break repair via nonhomologous end joining"/>
    <property type="evidence" value="ECO:0000315"/>
    <property type="project" value="SGD"/>
</dbReference>
<dbReference type="GO" id="GO:0051321">
    <property type="term" value="P:meiotic cell cycle"/>
    <property type="evidence" value="ECO:0000315"/>
    <property type="project" value="SGD"/>
</dbReference>
<dbReference type="GO" id="GO:0000070">
    <property type="term" value="P:mitotic sister chromatid segregation"/>
    <property type="evidence" value="ECO:0000315"/>
    <property type="project" value="SGD"/>
</dbReference>
<dbReference type="GO" id="GO:0031578">
    <property type="term" value="P:mitotic spindle orientation checkpoint signaling"/>
    <property type="evidence" value="ECO:0000316"/>
    <property type="project" value="SGD"/>
</dbReference>
<dbReference type="GO" id="GO:0030163">
    <property type="term" value="P:protein catabolic process"/>
    <property type="evidence" value="ECO:0000315"/>
    <property type="project" value="SGD"/>
</dbReference>
<dbReference type="GO" id="GO:0007165">
    <property type="term" value="P:signal transduction"/>
    <property type="evidence" value="ECO:0000318"/>
    <property type="project" value="GO_Central"/>
</dbReference>
<dbReference type="CDD" id="cd14137">
    <property type="entry name" value="STKc_GSK3"/>
    <property type="match status" value="1"/>
</dbReference>
<dbReference type="FunFam" id="1.10.510.10:FF:000082">
    <property type="entry name" value="Shaggy-related protein kinase kappa"/>
    <property type="match status" value="1"/>
</dbReference>
<dbReference type="Gene3D" id="3.30.200.20">
    <property type="entry name" value="Phosphorylase Kinase, domain 1"/>
    <property type="match status" value="1"/>
</dbReference>
<dbReference type="Gene3D" id="1.10.510.10">
    <property type="entry name" value="Transferase(Phosphotransferase) domain 1"/>
    <property type="match status" value="1"/>
</dbReference>
<dbReference type="InterPro" id="IPR050591">
    <property type="entry name" value="GSK-3"/>
</dbReference>
<dbReference type="InterPro" id="IPR011009">
    <property type="entry name" value="Kinase-like_dom_sf"/>
</dbReference>
<dbReference type="InterPro" id="IPR000719">
    <property type="entry name" value="Prot_kinase_dom"/>
</dbReference>
<dbReference type="InterPro" id="IPR017441">
    <property type="entry name" value="Protein_kinase_ATP_BS"/>
</dbReference>
<dbReference type="InterPro" id="IPR008271">
    <property type="entry name" value="Ser/Thr_kinase_AS"/>
</dbReference>
<dbReference type="InterPro" id="IPR039192">
    <property type="entry name" value="STKc_GSK3"/>
</dbReference>
<dbReference type="PANTHER" id="PTHR24057">
    <property type="entry name" value="GLYCOGEN SYNTHASE KINASE-3 ALPHA"/>
    <property type="match status" value="1"/>
</dbReference>
<dbReference type="PANTHER" id="PTHR24057:SF4">
    <property type="entry name" value="PROTEIN KINASE MCK1"/>
    <property type="match status" value="1"/>
</dbReference>
<dbReference type="Pfam" id="PF00069">
    <property type="entry name" value="Pkinase"/>
    <property type="match status" value="1"/>
</dbReference>
<dbReference type="SMART" id="SM00220">
    <property type="entry name" value="S_TKc"/>
    <property type="match status" value="1"/>
</dbReference>
<dbReference type="SUPFAM" id="SSF56112">
    <property type="entry name" value="Protein kinase-like (PK-like)"/>
    <property type="match status" value="1"/>
</dbReference>
<dbReference type="PROSITE" id="PS00107">
    <property type="entry name" value="PROTEIN_KINASE_ATP"/>
    <property type="match status" value="1"/>
</dbReference>
<dbReference type="PROSITE" id="PS50011">
    <property type="entry name" value="PROTEIN_KINASE_DOM"/>
    <property type="match status" value="1"/>
</dbReference>
<dbReference type="PROSITE" id="PS00108">
    <property type="entry name" value="PROTEIN_KINASE_ST"/>
    <property type="match status" value="1"/>
</dbReference>
<keyword id="KW-0007">Acetylation</keyword>
<keyword id="KW-0067">ATP-binding</keyword>
<keyword id="KW-0903">Direct protein sequencing</keyword>
<keyword id="KW-0418">Kinase</keyword>
<keyword id="KW-0547">Nucleotide-binding</keyword>
<keyword id="KW-0597">Phosphoprotein</keyword>
<keyword id="KW-1185">Reference proteome</keyword>
<keyword id="KW-0723">Serine/threonine-protein kinase</keyword>
<keyword id="KW-0808">Transferase</keyword>
<name>MCK1_YEAST</name>
<accession>P21965</accession>
<accession>D6W0N8</accession>
<protein>
    <recommendedName>
        <fullName>Protein kinase MCK1</fullName>
        <ecNumber>2.7.12.1</ecNumber>
    </recommendedName>
    <alternativeName>
        <fullName>Meiosis and centromere regulatory kinase</fullName>
    </alternativeName>
</protein>
<feature type="initiator methionine" description="Removed" evidence="7">
    <location>
        <position position="1"/>
    </location>
</feature>
<feature type="chain" id="PRO_0000086317" description="Protein kinase MCK1">
    <location>
        <begin position="2"/>
        <end position="375"/>
    </location>
</feature>
<feature type="domain" description="Protein kinase" evidence="1">
    <location>
        <begin position="35"/>
        <end position="327"/>
    </location>
</feature>
<feature type="active site" description="Proton acceptor" evidence="1 2">
    <location>
        <position position="164"/>
    </location>
</feature>
<feature type="binding site" evidence="1">
    <location>
        <begin position="41"/>
        <end position="49"/>
    </location>
    <ligand>
        <name>ATP</name>
        <dbReference type="ChEBI" id="CHEBI:30616"/>
    </ligand>
</feature>
<feature type="binding site" evidence="1">
    <location>
        <position position="68"/>
    </location>
    <ligand>
        <name>ATP</name>
        <dbReference type="ChEBI" id="CHEBI:30616"/>
    </ligand>
</feature>
<feature type="modified residue" description="N-acetylserine" evidence="7">
    <location>
        <position position="2"/>
    </location>
</feature>
<feature type="modified residue" description="Phosphoserine" evidence="5 6">
    <location>
        <position position="198"/>
    </location>
</feature>
<feature type="modified residue" description="Phosphotyrosine" evidence="4 6">
    <location>
        <position position="199"/>
    </location>
</feature>
<feature type="modified residue" description="Phosphoserine" evidence="6">
    <location>
        <position position="202"/>
    </location>
</feature>
<proteinExistence type="evidence at protein level"/>
<evidence type="ECO:0000255" key="1">
    <source>
        <dbReference type="PROSITE-ProRule" id="PRU00159"/>
    </source>
</evidence>
<evidence type="ECO:0000255" key="2">
    <source>
        <dbReference type="PROSITE-ProRule" id="PRU10027"/>
    </source>
</evidence>
<evidence type="ECO:0000269" key="3">
    <source>
    </source>
</evidence>
<evidence type="ECO:0007744" key="4">
    <source>
    </source>
</evidence>
<evidence type="ECO:0007744" key="5">
    <source>
    </source>
</evidence>
<evidence type="ECO:0007744" key="6">
    <source>
    </source>
</evidence>
<evidence type="ECO:0007744" key="7">
    <source>
    </source>
</evidence>
<sequence>MSTEEQNGVPLQRGSEFIADDVTSNKSNNTRRMLVKEYRKIGRGAFGTVVQAYLTQDKKNWLGPFAIKKVPAHTEYKSRELQILRIADHPNIVKLQYFFTHLSPQDNKVYQHLAMECLPETLQIEINRYVTNKLEMPLKHIRLYTYQIARGMLYLHGLGVCHRDIKPSNVLVDPETGVLKICDFGSAKKLEHNQPSISYICSRFYRAPELIIGCTQYTTQIDIWGLGCVMGEMLIGKAIFQGQEPLLQLREIAKLLGPPDKRFIFFSNPAYDGPLFSKPLFSGSSQQRFEKYFGHSGPDGIDLLMKILVYEPQQRLSPRRILAHQFFNELRNDDTFLPRGFTEPIKLPNLFDFNDFELQILGEFADKIKPTKVAE</sequence>
<comment type="function">
    <text>May be an autophosphorylating tyrosine kinase, a bifunctional (serine/tyrosine-specific) protein kinase, or a serine kinase that is a substrate for an associated tyrosine kinase. MCK1 is a transcriptional activator of IME1, it stimulates spore maturation, and play a positive regulatory role in both mitotic centromere function and activation of early meiotic gene expression.</text>
</comment>
<comment type="catalytic activity">
    <reaction>
        <text>L-seryl-[protein] + ATP = O-phospho-L-seryl-[protein] + ADP + H(+)</text>
        <dbReference type="Rhea" id="RHEA:17989"/>
        <dbReference type="Rhea" id="RHEA-COMP:9863"/>
        <dbReference type="Rhea" id="RHEA-COMP:11604"/>
        <dbReference type="ChEBI" id="CHEBI:15378"/>
        <dbReference type="ChEBI" id="CHEBI:29999"/>
        <dbReference type="ChEBI" id="CHEBI:30616"/>
        <dbReference type="ChEBI" id="CHEBI:83421"/>
        <dbReference type="ChEBI" id="CHEBI:456216"/>
        <dbReference type="EC" id="2.7.12.1"/>
    </reaction>
</comment>
<comment type="catalytic activity">
    <reaction>
        <text>L-threonyl-[protein] + ATP = O-phospho-L-threonyl-[protein] + ADP + H(+)</text>
        <dbReference type="Rhea" id="RHEA:46608"/>
        <dbReference type="Rhea" id="RHEA-COMP:11060"/>
        <dbReference type="Rhea" id="RHEA-COMP:11605"/>
        <dbReference type="ChEBI" id="CHEBI:15378"/>
        <dbReference type="ChEBI" id="CHEBI:30013"/>
        <dbReference type="ChEBI" id="CHEBI:30616"/>
        <dbReference type="ChEBI" id="CHEBI:61977"/>
        <dbReference type="ChEBI" id="CHEBI:456216"/>
        <dbReference type="EC" id="2.7.12.1"/>
    </reaction>
</comment>
<comment type="catalytic activity">
    <reaction>
        <text>L-tyrosyl-[protein] + ATP = O-phospho-L-tyrosyl-[protein] + ADP + H(+)</text>
        <dbReference type="Rhea" id="RHEA:10596"/>
        <dbReference type="Rhea" id="RHEA-COMP:10136"/>
        <dbReference type="Rhea" id="RHEA-COMP:20101"/>
        <dbReference type="ChEBI" id="CHEBI:15378"/>
        <dbReference type="ChEBI" id="CHEBI:30616"/>
        <dbReference type="ChEBI" id="CHEBI:46858"/>
        <dbReference type="ChEBI" id="CHEBI:61978"/>
        <dbReference type="ChEBI" id="CHEBI:456216"/>
        <dbReference type="EC" id="2.7.12.1"/>
    </reaction>
</comment>
<comment type="interaction">
    <interactant intactId="EBI-10517">
        <id>P21965</id>
    </interactant>
    <interactant intactId="EBI-4192">
        <id>Q00684</id>
        <label>CDC14</label>
    </interactant>
    <organismsDiffer>false</organismsDiffer>
    <experiments>2</experiments>
</comment>
<comment type="interaction">
    <interactant intactId="EBI-10517">
        <id>P21965</id>
    </interactant>
    <interactant intactId="EBI-19909">
        <id>P19812</id>
        <label>UBR1</label>
    </interactant>
    <organismsDiffer>false</organismsDiffer>
    <experiments>3</experiments>
</comment>
<comment type="PTM">
    <text>Phosphorylated at tyrosine and serine.</text>
</comment>
<comment type="miscellaneous">
    <text evidence="3">Present with 396 molecules/cell in log phase SD medium.</text>
</comment>
<comment type="similarity">
    <text evidence="1">Belongs to the protein kinase superfamily. Ser/Thr protein kinase family.</text>
</comment>